<sequence length="470" mass="52261">MEPVYSWGNTHLDFVDPEIYDLIEKEKHRQCRGIELIAAENFTSVAVMEALGSCLTNKYSEGMPGNRYYGGTEFIDEIESLCRSRSLEAFHCNPEKWGVNVQPYSGSPANFAAYTALLQPHDRIMGLDLPSGGHITHGYYSSGGKNISATSIYFENLPYKVDSKTGYIDYDKLEEKAMDFRPKLIICGGTSYPREWDYARFRAVADKVGAFLLCDMAHNSALVAAQEAADPFEYCDVVTTSTHKSLRGPRAGMIFYRKGPKPAKKGQPEGEVYDFDAKINSAVFPALQSGPHNNKIGALAVALKQVMAPSFKVYAKQVKANAACLASYLINKGYTLVTDGTDNHLILWDLRPLGLTGNKVEKVCELCYITLNRNAVFGDTSFLAPGGVRIGTPAMTSRGLVEKDFEKIGEFLHRAVTITLDIQEQYGKVMKDFNKGLVNNKEIDEIKADVEEFTYDFDMPGFFISESRND</sequence>
<dbReference type="EC" id="2.1.2.1"/>
<dbReference type="EMBL" id="AL035528">
    <property type="protein sequence ID" value="CAB36853.1"/>
    <property type="molecule type" value="Genomic_DNA"/>
</dbReference>
<dbReference type="EMBL" id="AL161537">
    <property type="protein sequence ID" value="CAB78431.1"/>
    <property type="molecule type" value="Genomic_DNA"/>
</dbReference>
<dbReference type="EMBL" id="CP002687">
    <property type="protein sequence ID" value="AEE83342.1"/>
    <property type="molecule type" value="Genomic_DNA"/>
</dbReference>
<dbReference type="PIR" id="T05258">
    <property type="entry name" value="T05258"/>
</dbReference>
<dbReference type="RefSeq" id="NP_193125.1">
    <property type="nucleotide sequence ID" value="NM_117463.3"/>
</dbReference>
<dbReference type="SMR" id="Q9SVM4"/>
<dbReference type="FunCoup" id="Q9SVM4">
    <property type="interactions" value="701"/>
</dbReference>
<dbReference type="STRING" id="3702.Q9SVM4"/>
<dbReference type="PaxDb" id="3702-AT4G13890.1"/>
<dbReference type="EnsemblPlants" id="AT4G13890.1">
    <property type="protein sequence ID" value="AT4G13890.1"/>
    <property type="gene ID" value="AT4G13890"/>
</dbReference>
<dbReference type="GeneID" id="827024"/>
<dbReference type="Gramene" id="AT4G13890.1">
    <property type="protein sequence ID" value="AT4G13890.1"/>
    <property type="gene ID" value="AT4G13890"/>
</dbReference>
<dbReference type="KEGG" id="ath:AT4G13890"/>
<dbReference type="Araport" id="AT4G13890"/>
<dbReference type="TAIR" id="AT4G13890">
    <property type="gene designation" value="EDA36"/>
</dbReference>
<dbReference type="eggNOG" id="KOG2467">
    <property type="taxonomic scope" value="Eukaryota"/>
</dbReference>
<dbReference type="HOGENOM" id="CLU_022477_0_1_1"/>
<dbReference type="InParanoid" id="Q9SVM4"/>
<dbReference type="PhylomeDB" id="Q9SVM4"/>
<dbReference type="BioCyc" id="ARA:AT4G13890-MONOMER"/>
<dbReference type="UniPathway" id="UPA00193"/>
<dbReference type="PRO" id="PR:Q9SVM4"/>
<dbReference type="Proteomes" id="UP000006548">
    <property type="component" value="Chromosome 4"/>
</dbReference>
<dbReference type="ExpressionAtlas" id="Q9SVM4">
    <property type="expression patterns" value="baseline and differential"/>
</dbReference>
<dbReference type="GO" id="GO:0005829">
    <property type="term" value="C:cytosol"/>
    <property type="evidence" value="ECO:0007005"/>
    <property type="project" value="TAIR"/>
</dbReference>
<dbReference type="GO" id="GO:0004372">
    <property type="term" value="F:glycine hydroxymethyltransferase activity"/>
    <property type="evidence" value="ECO:0007669"/>
    <property type="project" value="UniProtKB-EC"/>
</dbReference>
<dbReference type="GO" id="GO:0030170">
    <property type="term" value="F:pyridoxal phosphate binding"/>
    <property type="evidence" value="ECO:0007669"/>
    <property type="project" value="InterPro"/>
</dbReference>
<dbReference type="GO" id="GO:0019264">
    <property type="term" value="P:glycine biosynthetic process from serine"/>
    <property type="evidence" value="ECO:0007669"/>
    <property type="project" value="InterPro"/>
</dbReference>
<dbReference type="GO" id="GO:0010197">
    <property type="term" value="P:polar nucleus fusion"/>
    <property type="evidence" value="ECO:0000315"/>
    <property type="project" value="TAIR"/>
</dbReference>
<dbReference type="GO" id="GO:0009555">
    <property type="term" value="P:pollen development"/>
    <property type="evidence" value="ECO:0000315"/>
    <property type="project" value="TAIR"/>
</dbReference>
<dbReference type="GO" id="GO:0035999">
    <property type="term" value="P:tetrahydrofolate interconversion"/>
    <property type="evidence" value="ECO:0007669"/>
    <property type="project" value="UniProtKB-UniPathway"/>
</dbReference>
<dbReference type="CDD" id="cd00378">
    <property type="entry name" value="SHMT"/>
    <property type="match status" value="1"/>
</dbReference>
<dbReference type="FunFam" id="3.40.640.10:FF:000097">
    <property type="entry name" value="Serine hydroxymethyltransferase"/>
    <property type="match status" value="1"/>
</dbReference>
<dbReference type="Gene3D" id="3.90.1150.10">
    <property type="entry name" value="Aspartate Aminotransferase, domain 1"/>
    <property type="match status" value="1"/>
</dbReference>
<dbReference type="Gene3D" id="3.40.640.10">
    <property type="entry name" value="Type I PLP-dependent aspartate aminotransferase-like (Major domain)"/>
    <property type="match status" value="1"/>
</dbReference>
<dbReference type="HAMAP" id="MF_00051">
    <property type="entry name" value="SHMT"/>
    <property type="match status" value="1"/>
</dbReference>
<dbReference type="InterPro" id="IPR015424">
    <property type="entry name" value="PyrdxlP-dep_Trfase"/>
</dbReference>
<dbReference type="InterPro" id="IPR015421">
    <property type="entry name" value="PyrdxlP-dep_Trfase_major"/>
</dbReference>
<dbReference type="InterPro" id="IPR015422">
    <property type="entry name" value="PyrdxlP-dep_Trfase_small"/>
</dbReference>
<dbReference type="InterPro" id="IPR001085">
    <property type="entry name" value="Ser_HO-MeTrfase"/>
</dbReference>
<dbReference type="InterPro" id="IPR049943">
    <property type="entry name" value="Ser_HO-MeTrfase-like"/>
</dbReference>
<dbReference type="InterPro" id="IPR019798">
    <property type="entry name" value="Ser_HO-MeTrfase_PLP_BS"/>
</dbReference>
<dbReference type="InterPro" id="IPR039429">
    <property type="entry name" value="SHMT-like_dom"/>
</dbReference>
<dbReference type="NCBIfam" id="NF000586">
    <property type="entry name" value="PRK00011.1"/>
    <property type="match status" value="1"/>
</dbReference>
<dbReference type="PANTHER" id="PTHR11680">
    <property type="entry name" value="SERINE HYDROXYMETHYLTRANSFERASE"/>
    <property type="match status" value="1"/>
</dbReference>
<dbReference type="PANTHER" id="PTHR11680:SF35">
    <property type="entry name" value="SERINE HYDROXYMETHYLTRANSFERASE 1"/>
    <property type="match status" value="1"/>
</dbReference>
<dbReference type="Pfam" id="PF00464">
    <property type="entry name" value="SHMT"/>
    <property type="match status" value="1"/>
</dbReference>
<dbReference type="PIRSF" id="PIRSF000412">
    <property type="entry name" value="SHMT"/>
    <property type="match status" value="1"/>
</dbReference>
<dbReference type="SUPFAM" id="SSF53383">
    <property type="entry name" value="PLP-dependent transferases"/>
    <property type="match status" value="1"/>
</dbReference>
<dbReference type="PROSITE" id="PS00096">
    <property type="entry name" value="SHMT"/>
    <property type="match status" value="1"/>
</dbReference>
<accession>Q9SVM4</accession>
<comment type="function">
    <text evidence="1">Catalyzes the interconversion of serine and glycine.</text>
</comment>
<comment type="catalytic activity">
    <reaction>
        <text>(6R)-5,10-methylene-5,6,7,8-tetrahydrofolate + glycine + H2O = (6S)-5,6,7,8-tetrahydrofolate + L-serine</text>
        <dbReference type="Rhea" id="RHEA:15481"/>
        <dbReference type="ChEBI" id="CHEBI:15377"/>
        <dbReference type="ChEBI" id="CHEBI:15636"/>
        <dbReference type="ChEBI" id="CHEBI:33384"/>
        <dbReference type="ChEBI" id="CHEBI:57305"/>
        <dbReference type="ChEBI" id="CHEBI:57453"/>
        <dbReference type="EC" id="2.1.2.1"/>
    </reaction>
</comment>
<comment type="cofactor">
    <cofactor evidence="1">
        <name>pyridoxal 5'-phosphate</name>
        <dbReference type="ChEBI" id="CHEBI:597326"/>
    </cofactor>
</comment>
<comment type="pathway">
    <text>One-carbon metabolism; tetrahydrofolate interconversion.</text>
</comment>
<comment type="subunit">
    <text evidence="1">Homotetramer.</text>
</comment>
<comment type="subcellular location">
    <subcellularLocation>
        <location evidence="2">Cytoplasm</location>
    </subcellularLocation>
</comment>
<comment type="similarity">
    <text evidence="2">Belongs to the SHMT family.</text>
</comment>
<evidence type="ECO:0000250" key="1"/>
<evidence type="ECO:0000305" key="2"/>
<name>GLYC5_ARATH</name>
<keyword id="KW-0963">Cytoplasm</keyword>
<keyword id="KW-0554">One-carbon metabolism</keyword>
<keyword id="KW-0663">Pyridoxal phosphate</keyword>
<keyword id="KW-1185">Reference proteome</keyword>
<keyword id="KW-0808">Transferase</keyword>
<proteinExistence type="inferred from homology"/>
<protein>
    <recommendedName>
        <fullName>Serine hydroxymethyltransferase 5</fullName>
        <shortName>AtSHMT5</shortName>
        <ecNumber>2.1.2.1</ecNumber>
    </recommendedName>
    <alternativeName>
        <fullName>Glycine hydroxymethyltransferase 5</fullName>
    </alternativeName>
    <alternativeName>
        <fullName>Protein EMBRYO SAC DEVELOPMENT ARREST 36</fullName>
    </alternativeName>
    <alternativeName>
        <fullName>Protein EMBRYO SAC DEVELOPMENT ARREST 37</fullName>
    </alternativeName>
    <alternativeName>
        <fullName>Serine methylase 5</fullName>
    </alternativeName>
</protein>
<organism>
    <name type="scientific">Arabidopsis thaliana</name>
    <name type="common">Mouse-ear cress</name>
    <dbReference type="NCBI Taxonomy" id="3702"/>
    <lineage>
        <taxon>Eukaryota</taxon>
        <taxon>Viridiplantae</taxon>
        <taxon>Streptophyta</taxon>
        <taxon>Embryophyta</taxon>
        <taxon>Tracheophyta</taxon>
        <taxon>Spermatophyta</taxon>
        <taxon>Magnoliopsida</taxon>
        <taxon>eudicotyledons</taxon>
        <taxon>Gunneridae</taxon>
        <taxon>Pentapetalae</taxon>
        <taxon>rosids</taxon>
        <taxon>malvids</taxon>
        <taxon>Brassicales</taxon>
        <taxon>Brassicaceae</taxon>
        <taxon>Camelineae</taxon>
        <taxon>Arabidopsis</taxon>
    </lineage>
</organism>
<reference key="1">
    <citation type="journal article" date="1999" name="Nature">
        <title>Sequence and analysis of chromosome 4 of the plant Arabidopsis thaliana.</title>
        <authorList>
            <person name="Mayer K.F.X."/>
            <person name="Schueller C."/>
            <person name="Wambutt R."/>
            <person name="Murphy G."/>
            <person name="Volckaert G."/>
            <person name="Pohl T."/>
            <person name="Duesterhoeft A."/>
            <person name="Stiekema W."/>
            <person name="Entian K.-D."/>
            <person name="Terryn N."/>
            <person name="Harris B."/>
            <person name="Ansorge W."/>
            <person name="Brandt P."/>
            <person name="Grivell L.A."/>
            <person name="Rieger M."/>
            <person name="Weichselgartner M."/>
            <person name="de Simone V."/>
            <person name="Obermaier B."/>
            <person name="Mache R."/>
            <person name="Mueller M."/>
            <person name="Kreis M."/>
            <person name="Delseny M."/>
            <person name="Puigdomenech P."/>
            <person name="Watson M."/>
            <person name="Schmidtheini T."/>
            <person name="Reichert B."/>
            <person name="Portetelle D."/>
            <person name="Perez-Alonso M."/>
            <person name="Boutry M."/>
            <person name="Bancroft I."/>
            <person name="Vos P."/>
            <person name="Hoheisel J."/>
            <person name="Zimmermann W."/>
            <person name="Wedler H."/>
            <person name="Ridley P."/>
            <person name="Langham S.-A."/>
            <person name="McCullagh B."/>
            <person name="Bilham L."/>
            <person name="Robben J."/>
            <person name="van der Schueren J."/>
            <person name="Grymonprez B."/>
            <person name="Chuang Y.-J."/>
            <person name="Vandenbussche F."/>
            <person name="Braeken M."/>
            <person name="Weltjens I."/>
            <person name="Voet M."/>
            <person name="Bastiaens I."/>
            <person name="Aert R."/>
            <person name="Defoor E."/>
            <person name="Weitzenegger T."/>
            <person name="Bothe G."/>
            <person name="Ramsperger U."/>
            <person name="Hilbert H."/>
            <person name="Braun M."/>
            <person name="Holzer E."/>
            <person name="Brandt A."/>
            <person name="Peters S."/>
            <person name="van Staveren M."/>
            <person name="Dirkse W."/>
            <person name="Mooijman P."/>
            <person name="Klein Lankhorst R."/>
            <person name="Rose M."/>
            <person name="Hauf J."/>
            <person name="Koetter P."/>
            <person name="Berneiser S."/>
            <person name="Hempel S."/>
            <person name="Feldpausch M."/>
            <person name="Lamberth S."/>
            <person name="Van den Daele H."/>
            <person name="De Keyser A."/>
            <person name="Buysshaert C."/>
            <person name="Gielen J."/>
            <person name="Villarroel R."/>
            <person name="De Clercq R."/>
            <person name="van Montagu M."/>
            <person name="Rogers J."/>
            <person name="Cronin A."/>
            <person name="Quail M.A."/>
            <person name="Bray-Allen S."/>
            <person name="Clark L."/>
            <person name="Doggett J."/>
            <person name="Hall S."/>
            <person name="Kay M."/>
            <person name="Lennard N."/>
            <person name="McLay K."/>
            <person name="Mayes R."/>
            <person name="Pettett A."/>
            <person name="Rajandream M.A."/>
            <person name="Lyne M."/>
            <person name="Benes V."/>
            <person name="Rechmann S."/>
            <person name="Borkova D."/>
            <person name="Bloecker H."/>
            <person name="Scharfe M."/>
            <person name="Grimm M."/>
            <person name="Loehnert T.-H."/>
            <person name="Dose S."/>
            <person name="de Haan M."/>
            <person name="Maarse A.C."/>
            <person name="Schaefer M."/>
            <person name="Mueller-Auer S."/>
            <person name="Gabel C."/>
            <person name="Fuchs M."/>
            <person name="Fartmann B."/>
            <person name="Granderath K."/>
            <person name="Dauner D."/>
            <person name="Herzl A."/>
            <person name="Neumann S."/>
            <person name="Argiriou A."/>
            <person name="Vitale D."/>
            <person name="Liguori R."/>
            <person name="Piravandi E."/>
            <person name="Massenet O."/>
            <person name="Quigley F."/>
            <person name="Clabauld G."/>
            <person name="Muendlein A."/>
            <person name="Felber R."/>
            <person name="Schnabl S."/>
            <person name="Hiller R."/>
            <person name="Schmidt W."/>
            <person name="Lecharny A."/>
            <person name="Aubourg S."/>
            <person name="Chefdor F."/>
            <person name="Cooke R."/>
            <person name="Berger C."/>
            <person name="Monfort A."/>
            <person name="Casacuberta E."/>
            <person name="Gibbons T."/>
            <person name="Weber N."/>
            <person name="Vandenbol M."/>
            <person name="Bargues M."/>
            <person name="Terol J."/>
            <person name="Torres A."/>
            <person name="Perez-Perez A."/>
            <person name="Purnelle B."/>
            <person name="Bent E."/>
            <person name="Johnson S."/>
            <person name="Tacon D."/>
            <person name="Jesse T."/>
            <person name="Heijnen L."/>
            <person name="Schwarz S."/>
            <person name="Scholler P."/>
            <person name="Heber S."/>
            <person name="Francs P."/>
            <person name="Bielke C."/>
            <person name="Frishman D."/>
            <person name="Haase D."/>
            <person name="Lemcke K."/>
            <person name="Mewes H.-W."/>
            <person name="Stocker S."/>
            <person name="Zaccaria P."/>
            <person name="Bevan M."/>
            <person name="Wilson R.K."/>
            <person name="de la Bastide M."/>
            <person name="Habermann K."/>
            <person name="Parnell L."/>
            <person name="Dedhia N."/>
            <person name="Gnoj L."/>
            <person name="Schutz K."/>
            <person name="Huang E."/>
            <person name="Spiegel L."/>
            <person name="Sekhon M."/>
            <person name="Murray J."/>
            <person name="Sheet P."/>
            <person name="Cordes M."/>
            <person name="Abu-Threideh J."/>
            <person name="Stoneking T."/>
            <person name="Kalicki J."/>
            <person name="Graves T."/>
            <person name="Harmon G."/>
            <person name="Edwards J."/>
            <person name="Latreille P."/>
            <person name="Courtney L."/>
            <person name="Cloud J."/>
            <person name="Abbott A."/>
            <person name="Scott K."/>
            <person name="Johnson D."/>
            <person name="Minx P."/>
            <person name="Bentley D."/>
            <person name="Fulton B."/>
            <person name="Miller N."/>
            <person name="Greco T."/>
            <person name="Kemp K."/>
            <person name="Kramer J."/>
            <person name="Fulton L."/>
            <person name="Mardis E."/>
            <person name="Dante M."/>
            <person name="Pepin K."/>
            <person name="Hillier L.W."/>
            <person name="Nelson J."/>
            <person name="Spieth J."/>
            <person name="Ryan E."/>
            <person name="Andrews S."/>
            <person name="Geisel C."/>
            <person name="Layman D."/>
            <person name="Du H."/>
            <person name="Ali J."/>
            <person name="Berghoff A."/>
            <person name="Jones K."/>
            <person name="Drone K."/>
            <person name="Cotton M."/>
            <person name="Joshu C."/>
            <person name="Antonoiu B."/>
            <person name="Zidanic M."/>
            <person name="Strong C."/>
            <person name="Sun H."/>
            <person name="Lamar B."/>
            <person name="Yordan C."/>
            <person name="Ma P."/>
            <person name="Zhong J."/>
            <person name="Preston R."/>
            <person name="Vil D."/>
            <person name="Shekher M."/>
            <person name="Matero A."/>
            <person name="Shah R."/>
            <person name="Swaby I.K."/>
            <person name="O'Shaughnessy A."/>
            <person name="Rodriguez M."/>
            <person name="Hoffman J."/>
            <person name="Till S."/>
            <person name="Granat S."/>
            <person name="Shohdy N."/>
            <person name="Hasegawa A."/>
            <person name="Hameed A."/>
            <person name="Lodhi M."/>
            <person name="Johnson A."/>
            <person name="Chen E."/>
            <person name="Marra M.A."/>
            <person name="Martienssen R."/>
            <person name="McCombie W.R."/>
        </authorList>
    </citation>
    <scope>NUCLEOTIDE SEQUENCE [LARGE SCALE GENOMIC DNA]</scope>
    <source>
        <strain>cv. Columbia</strain>
    </source>
</reference>
<reference key="2">
    <citation type="journal article" date="2017" name="Plant J.">
        <title>Araport11: a complete reannotation of the Arabidopsis thaliana reference genome.</title>
        <authorList>
            <person name="Cheng C.Y."/>
            <person name="Krishnakumar V."/>
            <person name="Chan A.P."/>
            <person name="Thibaud-Nissen F."/>
            <person name="Schobel S."/>
            <person name="Town C.D."/>
        </authorList>
    </citation>
    <scope>GENOME REANNOTATION</scope>
    <source>
        <strain>cv. Columbia</strain>
    </source>
</reference>
<reference key="3">
    <citation type="journal article" date="2000" name="Plant Physiol.">
        <title>Integrated temporal regulation of the photorespiratory pathway. Circadian regulation of two Arabidopsis genes encoding serine hydroxymethyltransferase.</title>
        <authorList>
            <person name="McClung C.R."/>
            <person name="Hsu M."/>
            <person name="Painter J.E."/>
            <person name="Gagne J.M."/>
            <person name="Karlsberg S.D."/>
            <person name="Salome P.A."/>
        </authorList>
    </citation>
    <scope>GENE FAMILY</scope>
    <scope>NOMENCLATURE</scope>
</reference>
<reference key="4">
    <citation type="journal article" date="2003" name="J. Exp. Bot.">
        <title>Genetic manipulation of glycine decarboxylation.</title>
        <authorList>
            <person name="Bauwe H."/>
            <person name="Kolukisaoglu U."/>
        </authorList>
    </citation>
    <scope>REVIEW</scope>
</reference>
<reference key="5">
    <citation type="journal article" date="2010" name="Biochem. J.">
        <title>One-carbon metabolism in plants: characterization of a plastid serine hydroxymethyltransferase.</title>
        <authorList>
            <person name="Zhang Y."/>
            <person name="Sun K."/>
            <person name="Sandoval F.J."/>
            <person name="Santiago K."/>
            <person name="Roje S."/>
        </authorList>
    </citation>
    <scope>GENE FAMILY</scope>
</reference>
<gene>
    <name type="primary">SHM5</name>
    <name type="synonym">EDA36</name>
    <name type="synonym">EDA37</name>
    <name type="synonym">SHMT5</name>
    <name type="ordered locus">At4g13890</name>
    <name type="ORF">F18A5.280</name>
</gene>
<feature type="chain" id="PRO_0000422350" description="Serine hydroxymethyltransferase 5">
    <location>
        <begin position="1"/>
        <end position="470"/>
    </location>
</feature>
<feature type="modified residue" description="N6-(pyridoxal phosphate)lysine" evidence="1">
    <location>
        <position position="244"/>
    </location>
</feature>